<reference key="1">
    <citation type="submission" date="2006-06" db="EMBL/GenBank/DDBJ databases">
        <title>Complete sequence of Pseudoalteromonas atlantica T6c.</title>
        <authorList>
            <consortium name="US DOE Joint Genome Institute"/>
            <person name="Copeland A."/>
            <person name="Lucas S."/>
            <person name="Lapidus A."/>
            <person name="Barry K."/>
            <person name="Detter J.C."/>
            <person name="Glavina del Rio T."/>
            <person name="Hammon N."/>
            <person name="Israni S."/>
            <person name="Dalin E."/>
            <person name="Tice H."/>
            <person name="Pitluck S."/>
            <person name="Saunders E."/>
            <person name="Brettin T."/>
            <person name="Bruce D."/>
            <person name="Han C."/>
            <person name="Tapia R."/>
            <person name="Gilna P."/>
            <person name="Schmutz J."/>
            <person name="Larimer F."/>
            <person name="Land M."/>
            <person name="Hauser L."/>
            <person name="Kyrpides N."/>
            <person name="Kim E."/>
            <person name="Karls A.C."/>
            <person name="Bartlett D."/>
            <person name="Higgins B.P."/>
            <person name="Richardson P."/>
        </authorList>
    </citation>
    <scope>NUCLEOTIDE SEQUENCE [LARGE SCALE GENOMIC DNA]</scope>
    <source>
        <strain>T6c / ATCC BAA-1087</strain>
    </source>
</reference>
<name>RLMG_PSEA6</name>
<accession>Q15YR1</accession>
<evidence type="ECO:0000255" key="1">
    <source>
        <dbReference type="HAMAP-Rule" id="MF_01859"/>
    </source>
</evidence>
<organism>
    <name type="scientific">Pseudoalteromonas atlantica (strain T6c / ATCC BAA-1087)</name>
    <dbReference type="NCBI Taxonomy" id="3042615"/>
    <lineage>
        <taxon>Bacteria</taxon>
        <taxon>Pseudomonadati</taxon>
        <taxon>Pseudomonadota</taxon>
        <taxon>Gammaproteobacteria</taxon>
        <taxon>Alteromonadales</taxon>
        <taxon>Alteromonadaceae</taxon>
        <taxon>Paraglaciecola</taxon>
    </lineage>
</organism>
<feature type="chain" id="PRO_0000366470" description="Ribosomal RNA large subunit methyltransferase G">
    <location>
        <begin position="1"/>
        <end position="384"/>
    </location>
</feature>
<keyword id="KW-0963">Cytoplasm</keyword>
<keyword id="KW-0489">Methyltransferase</keyword>
<keyword id="KW-0698">rRNA processing</keyword>
<keyword id="KW-0949">S-adenosyl-L-methionine</keyword>
<keyword id="KW-0808">Transferase</keyword>
<gene>
    <name evidence="1" type="primary">rlmG</name>
    <name type="ordered locus">Patl_0447</name>
</gene>
<protein>
    <recommendedName>
        <fullName evidence="1">Ribosomal RNA large subunit methyltransferase G</fullName>
        <ecNumber evidence="1">2.1.1.174</ecNumber>
    </recommendedName>
    <alternativeName>
        <fullName evidence="1">23S rRNA m2G1835 methyltransferase</fullName>
    </alternativeName>
    <alternativeName>
        <fullName evidence="1">rRNA (guanine-N(2)-)-methyltransferase RlmG</fullName>
    </alternativeName>
</protein>
<sequence length="384" mass="43112">MKTELTLLDHSYELLRYPAENQHVSWQAWDSADEYLMEYVAQNITDLNGLNIHIYNDDFGALGVWFATNNAPLWISDSFVAHKALALNLERNHLPIENVNVQNSLYKANQKADLVLIKVPKTLALLEQQLIDLQSSVTPETRIIAAGKANAIQKSTLALFEKHLGLTTTSLAKKKSRLIFCQYDGVKQSVSPYPTKWKTDNTQFIMSNLANVFSRQQLDIGARVLLAHLPDANHKCIVDLGCGNGVLGLHVLHKSPGAHVIFVDESFMAIASAKMNIEQNMPDKLDQCKFIVSNCLDECLSSGENEATVDIVLCNPPFHQQNTITDHIALQMFKDSKRILKHAGELRVVGNRHLDYPQTIKRLFGHYKVLASDRKFSILSAIKK</sequence>
<comment type="function">
    <text evidence="1">Specifically methylates the guanine in position 1835 (m2G1835) of 23S rRNA.</text>
</comment>
<comment type="catalytic activity">
    <reaction evidence="1">
        <text>guanosine(1835) in 23S rRNA + S-adenosyl-L-methionine = N(2)-methylguanosine(1835) in 23S rRNA + S-adenosyl-L-homocysteine + H(+)</text>
        <dbReference type="Rhea" id="RHEA:42744"/>
        <dbReference type="Rhea" id="RHEA-COMP:10217"/>
        <dbReference type="Rhea" id="RHEA-COMP:10218"/>
        <dbReference type="ChEBI" id="CHEBI:15378"/>
        <dbReference type="ChEBI" id="CHEBI:57856"/>
        <dbReference type="ChEBI" id="CHEBI:59789"/>
        <dbReference type="ChEBI" id="CHEBI:74269"/>
        <dbReference type="ChEBI" id="CHEBI:74481"/>
        <dbReference type="EC" id="2.1.1.174"/>
    </reaction>
</comment>
<comment type="subcellular location">
    <subcellularLocation>
        <location evidence="1">Cytoplasm</location>
    </subcellularLocation>
</comment>
<comment type="similarity">
    <text evidence="1">Belongs to the methyltransferase superfamily. RlmG family.</text>
</comment>
<dbReference type="EC" id="2.1.1.174" evidence="1"/>
<dbReference type="EMBL" id="CP000388">
    <property type="protein sequence ID" value="ABG38977.1"/>
    <property type="molecule type" value="Genomic_DNA"/>
</dbReference>
<dbReference type="RefSeq" id="WP_011573373.1">
    <property type="nucleotide sequence ID" value="NC_008228.1"/>
</dbReference>
<dbReference type="SMR" id="Q15YR1"/>
<dbReference type="STRING" id="342610.Patl_0447"/>
<dbReference type="KEGG" id="pat:Patl_0447"/>
<dbReference type="eggNOG" id="COG2813">
    <property type="taxonomic scope" value="Bacteria"/>
</dbReference>
<dbReference type="HOGENOM" id="CLU_040288_4_0_6"/>
<dbReference type="OrthoDB" id="29650at2"/>
<dbReference type="Proteomes" id="UP000001981">
    <property type="component" value="Chromosome"/>
</dbReference>
<dbReference type="GO" id="GO:0005737">
    <property type="term" value="C:cytoplasm"/>
    <property type="evidence" value="ECO:0007669"/>
    <property type="project" value="UniProtKB-SubCell"/>
</dbReference>
<dbReference type="GO" id="GO:0052916">
    <property type="term" value="F:23S rRNA (guanine(1835)-N(2))-methyltransferase activity"/>
    <property type="evidence" value="ECO:0007669"/>
    <property type="project" value="UniProtKB-EC"/>
</dbReference>
<dbReference type="GO" id="GO:0003676">
    <property type="term" value="F:nucleic acid binding"/>
    <property type="evidence" value="ECO:0007669"/>
    <property type="project" value="InterPro"/>
</dbReference>
<dbReference type="CDD" id="cd02440">
    <property type="entry name" value="AdoMet_MTases"/>
    <property type="match status" value="1"/>
</dbReference>
<dbReference type="Gene3D" id="3.40.50.150">
    <property type="entry name" value="Vaccinia Virus protein VP39"/>
    <property type="match status" value="2"/>
</dbReference>
<dbReference type="HAMAP" id="MF_01859">
    <property type="entry name" value="23SrRNA_methyltr_G"/>
    <property type="match status" value="1"/>
</dbReference>
<dbReference type="InterPro" id="IPR002052">
    <property type="entry name" value="DNA_methylase_N6_adenine_CS"/>
</dbReference>
<dbReference type="InterPro" id="IPR017237">
    <property type="entry name" value="rRNA_m2G-MeTrfase_RlmG"/>
</dbReference>
<dbReference type="InterPro" id="IPR046977">
    <property type="entry name" value="RsmC/RlmG"/>
</dbReference>
<dbReference type="InterPro" id="IPR029063">
    <property type="entry name" value="SAM-dependent_MTases_sf"/>
</dbReference>
<dbReference type="InterPro" id="IPR007848">
    <property type="entry name" value="Small_mtfrase_dom"/>
</dbReference>
<dbReference type="PANTHER" id="PTHR47816:SF5">
    <property type="entry name" value="RIBOSOMAL RNA LARGE SUBUNIT METHYLTRANSFERASE G"/>
    <property type="match status" value="1"/>
</dbReference>
<dbReference type="PANTHER" id="PTHR47816">
    <property type="entry name" value="RIBOSOMAL RNA SMALL SUBUNIT METHYLTRANSFERASE C"/>
    <property type="match status" value="1"/>
</dbReference>
<dbReference type="Pfam" id="PF05175">
    <property type="entry name" value="MTS"/>
    <property type="match status" value="1"/>
</dbReference>
<dbReference type="PIRSF" id="PIRSF037565">
    <property type="entry name" value="RRNA_m2G_Mtase_RsmD_prd"/>
    <property type="match status" value="1"/>
</dbReference>
<dbReference type="SUPFAM" id="SSF53335">
    <property type="entry name" value="S-adenosyl-L-methionine-dependent methyltransferases"/>
    <property type="match status" value="1"/>
</dbReference>
<proteinExistence type="inferred from homology"/>